<keyword id="KW-0148">Chlorophyll</keyword>
<keyword id="KW-0157">Chromophore</keyword>
<keyword id="KW-0249">Electron transport</keyword>
<keyword id="KW-0408">Iron</keyword>
<keyword id="KW-0460">Magnesium</keyword>
<keyword id="KW-0472">Membrane</keyword>
<keyword id="KW-0479">Metal-binding</keyword>
<keyword id="KW-0560">Oxidoreductase</keyword>
<keyword id="KW-0602">Photosynthesis</keyword>
<keyword id="KW-0604">Photosystem II</keyword>
<keyword id="KW-1185">Reference proteome</keyword>
<keyword id="KW-0793">Thylakoid</keyword>
<keyword id="KW-0812">Transmembrane</keyword>
<keyword id="KW-1133">Transmembrane helix</keyword>
<keyword id="KW-0813">Transport</keyword>
<comment type="function">
    <text evidence="1">Photosystem II (PSII) is a light-driven water:plastoquinone oxidoreductase that uses light energy to abstract electrons from H(2)O, generating O(2) and a proton gradient subsequently used for ATP formation. It consists of a core antenna complex that captures photons, and an electron transfer chain that converts photonic excitation into a charge separation. The D1/D2 (PsbA/PsbD) reaction center heterodimer binds P680, the primary electron donor of PSII as well as several subsequent electron acceptors. D2 is needed for assembly of a stable PSII complex.</text>
</comment>
<comment type="catalytic activity">
    <reaction evidence="1">
        <text>2 a plastoquinone + 4 hnu + 2 H2O = 2 a plastoquinol + O2</text>
        <dbReference type="Rhea" id="RHEA:36359"/>
        <dbReference type="Rhea" id="RHEA-COMP:9561"/>
        <dbReference type="Rhea" id="RHEA-COMP:9562"/>
        <dbReference type="ChEBI" id="CHEBI:15377"/>
        <dbReference type="ChEBI" id="CHEBI:15379"/>
        <dbReference type="ChEBI" id="CHEBI:17757"/>
        <dbReference type="ChEBI" id="CHEBI:30212"/>
        <dbReference type="ChEBI" id="CHEBI:62192"/>
        <dbReference type="EC" id="1.10.3.9"/>
    </reaction>
</comment>
<comment type="cofactor">
    <text evidence="1">The D1/D2 heterodimer binds P680, chlorophylls that are the primary electron donor of PSII, and subsequent electron acceptors. It shares a non-heme iron and each subunit binds pheophytin, quinone, additional chlorophylls, carotenoids and lipids. There is also a Cl(-1) ion associated with D1 and D2, which is required for oxygen evolution. The PSII complex binds additional chlorophylls, carotenoids and specific lipids.</text>
</comment>
<comment type="subunit">
    <text evidence="1">PSII is composed of 1 copy each of membrane proteins PsbA, PsbB, PsbC, PsbD, PsbE, PsbF, PsbH, PsbI, PsbJ, PsbK, PsbL, PsbM, PsbT, PsbX, PsbY, PsbZ, Psb30/Ycf12, peripheral proteins PsbO, CyanoQ (PsbQ), PsbU, PsbV and a large number of cofactors. It forms dimeric complexes.</text>
</comment>
<comment type="subcellular location">
    <subcellularLocation>
        <location evidence="1">Cellular thylakoid membrane</location>
        <topology evidence="1">Multi-pass membrane protein</topology>
    </subcellularLocation>
</comment>
<comment type="miscellaneous">
    <text evidence="1">2 of the reaction center chlorophylls (ChlD1 and ChlD2) are entirely coordinated by water.</text>
</comment>
<comment type="similarity">
    <text evidence="1">Belongs to the reaction center PufL/M/PsbA/D family.</text>
</comment>
<organism>
    <name type="scientific">Synechococcus sp. (strain WH7803)</name>
    <dbReference type="NCBI Taxonomy" id="32051"/>
    <lineage>
        <taxon>Bacteria</taxon>
        <taxon>Bacillati</taxon>
        <taxon>Cyanobacteriota</taxon>
        <taxon>Cyanophyceae</taxon>
        <taxon>Synechococcales</taxon>
        <taxon>Synechococcaceae</taxon>
        <taxon>Synechococcus</taxon>
    </lineage>
</organism>
<dbReference type="EC" id="1.10.3.9" evidence="1"/>
<dbReference type="EMBL" id="CT971583">
    <property type="protein sequence ID" value="CAK24073.1"/>
    <property type="molecule type" value="Genomic_DNA"/>
</dbReference>
<dbReference type="EMBL" id="CT971583">
    <property type="protein sequence ID" value="CAK24665.1"/>
    <property type="molecule type" value="Genomic_DNA"/>
</dbReference>
<dbReference type="SMR" id="A5GMA8"/>
<dbReference type="STRING" id="32051.SynWH7803_1647"/>
<dbReference type="KEGG" id="syx:SynWH7803_1647"/>
<dbReference type="KEGG" id="syx:SynWH7803_2239"/>
<dbReference type="eggNOG" id="ENOG502Z8JK">
    <property type="taxonomic scope" value="Bacteria"/>
</dbReference>
<dbReference type="HOGENOM" id="CLU_077965_0_0_3"/>
<dbReference type="OrthoDB" id="505356at2"/>
<dbReference type="Proteomes" id="UP000001566">
    <property type="component" value="Chromosome"/>
</dbReference>
<dbReference type="GO" id="GO:0009523">
    <property type="term" value="C:photosystem II"/>
    <property type="evidence" value="ECO:0007669"/>
    <property type="project" value="UniProtKB-KW"/>
</dbReference>
<dbReference type="GO" id="GO:0031676">
    <property type="term" value="C:plasma membrane-derived thylakoid membrane"/>
    <property type="evidence" value="ECO:0007669"/>
    <property type="project" value="UniProtKB-SubCell"/>
</dbReference>
<dbReference type="GO" id="GO:0016168">
    <property type="term" value="F:chlorophyll binding"/>
    <property type="evidence" value="ECO:0007669"/>
    <property type="project" value="UniProtKB-UniRule"/>
</dbReference>
<dbReference type="GO" id="GO:0045156">
    <property type="term" value="F:electron transporter, transferring electrons within the cyclic electron transport pathway of photosynthesis activity"/>
    <property type="evidence" value="ECO:0007669"/>
    <property type="project" value="InterPro"/>
</dbReference>
<dbReference type="GO" id="GO:0005506">
    <property type="term" value="F:iron ion binding"/>
    <property type="evidence" value="ECO:0007669"/>
    <property type="project" value="UniProtKB-UniRule"/>
</dbReference>
<dbReference type="GO" id="GO:0010242">
    <property type="term" value="F:oxygen evolving activity"/>
    <property type="evidence" value="ECO:0007669"/>
    <property type="project" value="UniProtKB-EC"/>
</dbReference>
<dbReference type="GO" id="GO:0009772">
    <property type="term" value="P:photosynthetic electron transport in photosystem II"/>
    <property type="evidence" value="ECO:0007669"/>
    <property type="project" value="InterPro"/>
</dbReference>
<dbReference type="FunFam" id="1.20.85.10:FF:000001">
    <property type="entry name" value="photosystem II D2 protein-like"/>
    <property type="match status" value="1"/>
</dbReference>
<dbReference type="Gene3D" id="1.20.85.10">
    <property type="entry name" value="Photosystem II protein D1-like"/>
    <property type="match status" value="1"/>
</dbReference>
<dbReference type="HAMAP" id="MF_01383">
    <property type="entry name" value="PSII_PsbD_D2"/>
    <property type="match status" value="1"/>
</dbReference>
<dbReference type="InterPro" id="IPR055266">
    <property type="entry name" value="D1/D2"/>
</dbReference>
<dbReference type="InterPro" id="IPR036854">
    <property type="entry name" value="Photo_II_D1/D2_sf"/>
</dbReference>
<dbReference type="InterPro" id="IPR000484">
    <property type="entry name" value="Photo_RC_L/M"/>
</dbReference>
<dbReference type="InterPro" id="IPR055265">
    <property type="entry name" value="Photo_RC_L/M_CS"/>
</dbReference>
<dbReference type="InterPro" id="IPR005868">
    <property type="entry name" value="PSII_PsbD/D2"/>
</dbReference>
<dbReference type="NCBIfam" id="TIGR01152">
    <property type="entry name" value="psbD"/>
    <property type="match status" value="1"/>
</dbReference>
<dbReference type="PANTHER" id="PTHR33149:SF12">
    <property type="entry name" value="PHOTOSYSTEM II D2 PROTEIN"/>
    <property type="match status" value="1"/>
</dbReference>
<dbReference type="PANTHER" id="PTHR33149">
    <property type="entry name" value="PHOTOSYSTEM II PROTEIN D1"/>
    <property type="match status" value="1"/>
</dbReference>
<dbReference type="Pfam" id="PF00124">
    <property type="entry name" value="Photo_RC"/>
    <property type="match status" value="1"/>
</dbReference>
<dbReference type="PRINTS" id="PR00256">
    <property type="entry name" value="REACTNCENTRE"/>
</dbReference>
<dbReference type="SUPFAM" id="SSF81483">
    <property type="entry name" value="Bacterial photosystem II reaction centre, L and M subunits"/>
    <property type="match status" value="1"/>
</dbReference>
<dbReference type="PROSITE" id="PS00244">
    <property type="entry name" value="REACTION_CENTER"/>
    <property type="match status" value="1"/>
</dbReference>
<name>PSBD_SYNPW</name>
<feature type="chain" id="PRO_0000359612" description="Photosystem II D2 protein">
    <location>
        <begin position="1"/>
        <end position="351"/>
    </location>
</feature>
<feature type="transmembrane region" description="Helical" evidence="1">
    <location>
        <begin position="39"/>
        <end position="59"/>
    </location>
</feature>
<feature type="transmembrane region" description="Helical" evidence="1">
    <location>
        <begin position="123"/>
        <end position="139"/>
    </location>
</feature>
<feature type="transmembrane region" description="Helical" evidence="1">
    <location>
        <begin position="151"/>
        <end position="164"/>
    </location>
</feature>
<feature type="transmembrane region" description="Helical" evidence="1">
    <location>
        <begin position="206"/>
        <end position="226"/>
    </location>
</feature>
<feature type="transmembrane region" description="Helical" evidence="1">
    <location>
        <begin position="277"/>
        <end position="293"/>
    </location>
</feature>
<feature type="binding site" description="axial binding residue" evidence="1">
    <location>
        <position position="116"/>
    </location>
    <ligand>
        <name>chlorophyll a</name>
        <dbReference type="ChEBI" id="CHEBI:58416"/>
        <label>ChlzD2</label>
    </ligand>
    <ligandPart>
        <name>Mg</name>
        <dbReference type="ChEBI" id="CHEBI:25107"/>
    </ligandPart>
</feature>
<feature type="binding site" evidence="1">
    <location>
        <position position="128"/>
    </location>
    <ligand>
        <name>pheophytin a</name>
        <dbReference type="ChEBI" id="CHEBI:136840"/>
        <label>D2</label>
    </ligand>
</feature>
<feature type="binding site" evidence="1">
    <location>
        <position position="141"/>
    </location>
    <ligand>
        <name>pheophytin a</name>
        <dbReference type="ChEBI" id="CHEBI:136840"/>
        <label>D2</label>
    </ligand>
</feature>
<feature type="binding site" description="axial binding residue" evidence="1">
    <location>
        <position position="196"/>
    </location>
    <ligand>
        <name>chlorophyll a</name>
        <dbReference type="ChEBI" id="CHEBI:58416"/>
        <label>PD2</label>
    </ligand>
    <ligandPart>
        <name>Mg</name>
        <dbReference type="ChEBI" id="CHEBI:25107"/>
    </ligandPart>
</feature>
<feature type="binding site" evidence="1">
    <location>
        <position position="213"/>
    </location>
    <ligand>
        <name>a plastoquinone</name>
        <dbReference type="ChEBI" id="CHEBI:17757"/>
        <label>Q(A)</label>
    </ligand>
</feature>
<feature type="binding site" evidence="1">
    <location>
        <position position="213"/>
    </location>
    <ligand>
        <name>Fe cation</name>
        <dbReference type="ChEBI" id="CHEBI:24875"/>
        <note>ligand shared with heterodimeric partner</note>
    </ligand>
</feature>
<feature type="binding site" evidence="1">
    <location>
        <position position="260"/>
    </location>
    <ligand>
        <name>a plastoquinone</name>
        <dbReference type="ChEBI" id="CHEBI:17757"/>
        <label>Q(A)</label>
    </ligand>
</feature>
<feature type="binding site" evidence="1">
    <location>
        <position position="267"/>
    </location>
    <ligand>
        <name>Fe cation</name>
        <dbReference type="ChEBI" id="CHEBI:24875"/>
        <note>ligand shared with heterodimeric partner</note>
    </ligand>
</feature>
<protein>
    <recommendedName>
        <fullName evidence="1">Photosystem II D2 protein</fullName>
        <shortName evidence="1">PSII D2 protein</shortName>
        <ecNumber evidence="1">1.10.3.9</ecNumber>
    </recommendedName>
    <alternativeName>
        <fullName evidence="1">Photosystem Q(A) protein</fullName>
    </alternativeName>
</protein>
<proteinExistence type="inferred from homology"/>
<gene>
    <name evidence="1" type="primary">psbD1</name>
    <name type="ordered locus">SynWH7803_1647</name>
</gene>
<gene>
    <name evidence="1" type="primary">psbD2</name>
    <name type="ordered locus">SynWH7803_2239</name>
</gene>
<reference key="1">
    <citation type="submission" date="2006-05" db="EMBL/GenBank/DDBJ databases">
        <authorList>
            <consortium name="Genoscope"/>
        </authorList>
    </citation>
    <scope>NUCLEOTIDE SEQUENCE [LARGE SCALE GENOMIC DNA]</scope>
    <source>
        <strain>WH7803</strain>
    </source>
</reference>
<sequence length="351" mass="39283">MTIAVGRAPQRGWFDVLDDWLKRDRFVFVGWSGILLFPTAYLAIGGWLTGTTFVTSWYTHGIASSYLEGCNFLTAAVSTPADAMGHSLLLLWGPEAQGDFVRWCQLGGLWAFVALHGAFALIGFMLRQFEIARLVGIRPYNAIAFSGPIAVFVSVFLMYPLGQSSWFFAPSFGVAAIFRFLLFLQGFHNWTLNPFHMMGVAGILGGALLCAIHGATVENTLFEDGEQANTFKAFEPTQEEETYSMVTANRFWSQIFGIAFSNKRWLHFFMLFVPVMGLWTSSIGIIGLALNLRAYDFVSQEIRAAEDPEFETFYTKNILLNEGLRAWMAPADQPHENFVFPEEVLPRGNAL</sequence>
<evidence type="ECO:0000255" key="1">
    <source>
        <dbReference type="HAMAP-Rule" id="MF_01383"/>
    </source>
</evidence>
<accession>A5GMA8</accession>